<keyword id="KW-0067">ATP-binding</keyword>
<keyword id="KW-0963">Cytoplasm</keyword>
<keyword id="KW-0460">Magnesium</keyword>
<keyword id="KW-0479">Metal-binding</keyword>
<keyword id="KW-0547">Nucleotide-binding</keyword>
<keyword id="KW-0554">One-carbon metabolism</keyword>
<keyword id="KW-0630">Potassium</keyword>
<keyword id="KW-1185">Reference proteome</keyword>
<keyword id="KW-0808">Transferase</keyword>
<sequence length="419" mass="44971">MSRYVFTSESVTEGHPDKICDQVSDAVLDALLAQDPSSRVACETVVNTGLCLITGEVTSNAQVDFIHLVRNVIREIGYSGARAGGFDATSCAVLVALDQQSPDIAQGVNEADDHSGDPLDKVGAGDQGIMFGYACDETPELMPLPISLAHRLARQLAAVRHDGSLSYLLPDGKTQVSVVYENDRPVAIDTILISTQHTSEVEGISDENGIRERITQDLWTHVVEPATADLPLKPNREATRFLVNPTGKFVVGGPQGDAGLTGRKIIVDTYGGYARHGGGAFSGKDPTKVDRSAAYAARFVAKCLVAAGLAQRAEVQLSYAIGVAKPVSILVESFGTGKVTNDELTALVQDHFDLRPGAIIEQFKLRQLPQQRGGRFYQDTAAYGHFGRPDLKLPWEDVTDKASTLLQAEAQQQKQGSSL</sequence>
<feature type="chain" id="PRO_0000174570" description="S-adenosylmethionine synthase">
    <location>
        <begin position="1"/>
        <end position="419"/>
    </location>
</feature>
<feature type="region of interest" description="Flexible loop" evidence="1">
    <location>
        <begin position="100"/>
        <end position="110"/>
    </location>
</feature>
<feature type="binding site" description="in other chain" evidence="1">
    <location>
        <position position="15"/>
    </location>
    <ligand>
        <name>ATP</name>
        <dbReference type="ChEBI" id="CHEBI:30616"/>
        <note>ligand shared between two neighboring subunits</note>
    </ligand>
</feature>
<feature type="binding site" evidence="1">
    <location>
        <position position="17"/>
    </location>
    <ligand>
        <name>Mg(2+)</name>
        <dbReference type="ChEBI" id="CHEBI:18420"/>
    </ligand>
</feature>
<feature type="binding site" evidence="1">
    <location>
        <position position="43"/>
    </location>
    <ligand>
        <name>K(+)</name>
        <dbReference type="ChEBI" id="CHEBI:29103"/>
    </ligand>
</feature>
<feature type="binding site" description="in other chain" evidence="1">
    <location>
        <position position="56"/>
    </location>
    <ligand>
        <name>L-methionine</name>
        <dbReference type="ChEBI" id="CHEBI:57844"/>
        <note>ligand shared between two neighboring subunits</note>
    </ligand>
</feature>
<feature type="binding site" description="in other chain" evidence="1">
    <location>
        <position position="100"/>
    </location>
    <ligand>
        <name>L-methionine</name>
        <dbReference type="ChEBI" id="CHEBI:57844"/>
        <note>ligand shared between two neighboring subunits</note>
    </ligand>
</feature>
<feature type="binding site" description="in other chain" evidence="1">
    <location>
        <begin position="171"/>
        <end position="173"/>
    </location>
    <ligand>
        <name>ATP</name>
        <dbReference type="ChEBI" id="CHEBI:30616"/>
        <note>ligand shared between two neighboring subunits</note>
    </ligand>
</feature>
<feature type="binding site" description="in other chain" evidence="1">
    <location>
        <begin position="248"/>
        <end position="249"/>
    </location>
    <ligand>
        <name>ATP</name>
        <dbReference type="ChEBI" id="CHEBI:30616"/>
        <note>ligand shared between two neighboring subunits</note>
    </ligand>
</feature>
<feature type="binding site" evidence="1">
    <location>
        <position position="257"/>
    </location>
    <ligand>
        <name>ATP</name>
        <dbReference type="ChEBI" id="CHEBI:30616"/>
        <note>ligand shared between two neighboring subunits</note>
    </ligand>
</feature>
<feature type="binding site" evidence="1">
    <location>
        <position position="257"/>
    </location>
    <ligand>
        <name>L-methionine</name>
        <dbReference type="ChEBI" id="CHEBI:57844"/>
        <note>ligand shared between two neighboring subunits</note>
    </ligand>
</feature>
<feature type="binding site" description="in other chain" evidence="1">
    <location>
        <begin position="263"/>
        <end position="264"/>
    </location>
    <ligand>
        <name>ATP</name>
        <dbReference type="ChEBI" id="CHEBI:30616"/>
        <note>ligand shared between two neighboring subunits</note>
    </ligand>
</feature>
<feature type="binding site" evidence="1">
    <location>
        <position position="280"/>
    </location>
    <ligand>
        <name>ATP</name>
        <dbReference type="ChEBI" id="CHEBI:30616"/>
        <note>ligand shared between two neighboring subunits</note>
    </ligand>
</feature>
<feature type="binding site" evidence="1">
    <location>
        <position position="284"/>
    </location>
    <ligand>
        <name>ATP</name>
        <dbReference type="ChEBI" id="CHEBI:30616"/>
        <note>ligand shared between two neighboring subunits</note>
    </ligand>
</feature>
<feature type="binding site" description="in other chain" evidence="1">
    <location>
        <position position="288"/>
    </location>
    <ligand>
        <name>L-methionine</name>
        <dbReference type="ChEBI" id="CHEBI:57844"/>
        <note>ligand shared between two neighboring subunits</note>
    </ligand>
</feature>
<dbReference type="EC" id="2.5.1.6" evidence="1"/>
<dbReference type="EMBL" id="BX548175">
    <property type="protein sequence ID" value="CAE21845.1"/>
    <property type="molecule type" value="Genomic_DNA"/>
</dbReference>
<dbReference type="RefSeq" id="WP_011131037.1">
    <property type="nucleotide sequence ID" value="NC_005071.1"/>
</dbReference>
<dbReference type="SMR" id="Q7V5A2"/>
<dbReference type="KEGG" id="pmt:PMT_1670"/>
<dbReference type="eggNOG" id="COG0192">
    <property type="taxonomic scope" value="Bacteria"/>
</dbReference>
<dbReference type="HOGENOM" id="CLU_041802_1_1_3"/>
<dbReference type="OrthoDB" id="9801686at2"/>
<dbReference type="UniPathway" id="UPA00315">
    <property type="reaction ID" value="UER00080"/>
</dbReference>
<dbReference type="Proteomes" id="UP000001423">
    <property type="component" value="Chromosome"/>
</dbReference>
<dbReference type="GO" id="GO:0005737">
    <property type="term" value="C:cytoplasm"/>
    <property type="evidence" value="ECO:0007669"/>
    <property type="project" value="UniProtKB-SubCell"/>
</dbReference>
<dbReference type="GO" id="GO:0005524">
    <property type="term" value="F:ATP binding"/>
    <property type="evidence" value="ECO:0007669"/>
    <property type="project" value="UniProtKB-UniRule"/>
</dbReference>
<dbReference type="GO" id="GO:0000287">
    <property type="term" value="F:magnesium ion binding"/>
    <property type="evidence" value="ECO:0007669"/>
    <property type="project" value="UniProtKB-UniRule"/>
</dbReference>
<dbReference type="GO" id="GO:0004478">
    <property type="term" value="F:methionine adenosyltransferase activity"/>
    <property type="evidence" value="ECO:0007669"/>
    <property type="project" value="UniProtKB-UniRule"/>
</dbReference>
<dbReference type="GO" id="GO:0006730">
    <property type="term" value="P:one-carbon metabolic process"/>
    <property type="evidence" value="ECO:0007669"/>
    <property type="project" value="UniProtKB-KW"/>
</dbReference>
<dbReference type="GO" id="GO:0006556">
    <property type="term" value="P:S-adenosylmethionine biosynthetic process"/>
    <property type="evidence" value="ECO:0007669"/>
    <property type="project" value="UniProtKB-UniRule"/>
</dbReference>
<dbReference type="CDD" id="cd18079">
    <property type="entry name" value="S-AdoMet_synt"/>
    <property type="match status" value="1"/>
</dbReference>
<dbReference type="FunFam" id="3.30.300.10:FF:000003">
    <property type="entry name" value="S-adenosylmethionine synthase"/>
    <property type="match status" value="1"/>
</dbReference>
<dbReference type="FunFam" id="3.30.300.10:FF:000011">
    <property type="entry name" value="S-adenosylmethionine synthase"/>
    <property type="match status" value="1"/>
</dbReference>
<dbReference type="Gene3D" id="3.30.300.10">
    <property type="match status" value="3"/>
</dbReference>
<dbReference type="HAMAP" id="MF_00086">
    <property type="entry name" value="S_AdoMet_synth1"/>
    <property type="match status" value="1"/>
</dbReference>
<dbReference type="InterPro" id="IPR022631">
    <property type="entry name" value="ADOMET_SYNTHASE_CS"/>
</dbReference>
<dbReference type="InterPro" id="IPR022630">
    <property type="entry name" value="S-AdoMet_synt_C"/>
</dbReference>
<dbReference type="InterPro" id="IPR022629">
    <property type="entry name" value="S-AdoMet_synt_central"/>
</dbReference>
<dbReference type="InterPro" id="IPR022628">
    <property type="entry name" value="S-AdoMet_synt_N"/>
</dbReference>
<dbReference type="InterPro" id="IPR002133">
    <property type="entry name" value="S-AdoMet_synthetase"/>
</dbReference>
<dbReference type="InterPro" id="IPR022636">
    <property type="entry name" value="S-AdoMet_synthetase_sfam"/>
</dbReference>
<dbReference type="NCBIfam" id="TIGR01034">
    <property type="entry name" value="metK"/>
    <property type="match status" value="1"/>
</dbReference>
<dbReference type="PANTHER" id="PTHR11964">
    <property type="entry name" value="S-ADENOSYLMETHIONINE SYNTHETASE"/>
    <property type="match status" value="1"/>
</dbReference>
<dbReference type="Pfam" id="PF02773">
    <property type="entry name" value="S-AdoMet_synt_C"/>
    <property type="match status" value="1"/>
</dbReference>
<dbReference type="Pfam" id="PF02772">
    <property type="entry name" value="S-AdoMet_synt_M"/>
    <property type="match status" value="1"/>
</dbReference>
<dbReference type="Pfam" id="PF00438">
    <property type="entry name" value="S-AdoMet_synt_N"/>
    <property type="match status" value="1"/>
</dbReference>
<dbReference type="PIRSF" id="PIRSF000497">
    <property type="entry name" value="MAT"/>
    <property type="match status" value="1"/>
</dbReference>
<dbReference type="SUPFAM" id="SSF55973">
    <property type="entry name" value="S-adenosylmethionine synthetase"/>
    <property type="match status" value="3"/>
</dbReference>
<dbReference type="PROSITE" id="PS00376">
    <property type="entry name" value="ADOMET_SYNTHASE_1"/>
    <property type="match status" value="1"/>
</dbReference>
<dbReference type="PROSITE" id="PS00377">
    <property type="entry name" value="ADOMET_SYNTHASE_2"/>
    <property type="match status" value="1"/>
</dbReference>
<name>METK_PROMM</name>
<reference key="1">
    <citation type="journal article" date="2003" name="Nature">
        <title>Genome divergence in two Prochlorococcus ecotypes reflects oceanic niche differentiation.</title>
        <authorList>
            <person name="Rocap G."/>
            <person name="Larimer F.W."/>
            <person name="Lamerdin J.E."/>
            <person name="Malfatti S."/>
            <person name="Chain P."/>
            <person name="Ahlgren N.A."/>
            <person name="Arellano A."/>
            <person name="Coleman M."/>
            <person name="Hauser L."/>
            <person name="Hess W.R."/>
            <person name="Johnson Z.I."/>
            <person name="Land M.L."/>
            <person name="Lindell D."/>
            <person name="Post A.F."/>
            <person name="Regala W."/>
            <person name="Shah M."/>
            <person name="Shaw S.L."/>
            <person name="Steglich C."/>
            <person name="Sullivan M.B."/>
            <person name="Ting C.S."/>
            <person name="Tolonen A."/>
            <person name="Webb E.A."/>
            <person name="Zinser E.R."/>
            <person name="Chisholm S.W."/>
        </authorList>
    </citation>
    <scope>NUCLEOTIDE SEQUENCE [LARGE SCALE GENOMIC DNA]</scope>
    <source>
        <strain>MIT 9313</strain>
    </source>
</reference>
<evidence type="ECO:0000255" key="1">
    <source>
        <dbReference type="HAMAP-Rule" id="MF_00086"/>
    </source>
</evidence>
<protein>
    <recommendedName>
        <fullName evidence="1">S-adenosylmethionine synthase</fullName>
        <shortName evidence="1">AdoMet synthase</shortName>
        <ecNumber evidence="1">2.5.1.6</ecNumber>
    </recommendedName>
    <alternativeName>
        <fullName evidence="1">MAT</fullName>
    </alternativeName>
    <alternativeName>
        <fullName evidence="1">Methionine adenosyltransferase</fullName>
    </alternativeName>
</protein>
<gene>
    <name evidence="1" type="primary">metK</name>
    <name type="ordered locus">PMT_1670</name>
</gene>
<comment type="function">
    <text evidence="1">Catalyzes the formation of S-adenosylmethionine (AdoMet) from methionine and ATP. The overall synthetic reaction is composed of two sequential steps, AdoMet formation and the subsequent tripolyphosphate hydrolysis which occurs prior to release of AdoMet from the enzyme.</text>
</comment>
<comment type="catalytic activity">
    <reaction evidence="1">
        <text>L-methionine + ATP + H2O = S-adenosyl-L-methionine + phosphate + diphosphate</text>
        <dbReference type="Rhea" id="RHEA:21080"/>
        <dbReference type="ChEBI" id="CHEBI:15377"/>
        <dbReference type="ChEBI" id="CHEBI:30616"/>
        <dbReference type="ChEBI" id="CHEBI:33019"/>
        <dbReference type="ChEBI" id="CHEBI:43474"/>
        <dbReference type="ChEBI" id="CHEBI:57844"/>
        <dbReference type="ChEBI" id="CHEBI:59789"/>
        <dbReference type="EC" id="2.5.1.6"/>
    </reaction>
</comment>
<comment type="cofactor">
    <cofactor evidence="1">
        <name>Mg(2+)</name>
        <dbReference type="ChEBI" id="CHEBI:18420"/>
    </cofactor>
    <text evidence="1">Binds 2 divalent ions per subunit.</text>
</comment>
<comment type="cofactor">
    <cofactor evidence="1">
        <name>K(+)</name>
        <dbReference type="ChEBI" id="CHEBI:29103"/>
    </cofactor>
    <text evidence="1">Binds 1 potassium ion per subunit.</text>
</comment>
<comment type="pathway">
    <text evidence="1">Amino-acid biosynthesis; S-adenosyl-L-methionine biosynthesis; S-adenosyl-L-methionine from L-methionine: step 1/1.</text>
</comment>
<comment type="subunit">
    <text evidence="1">Homotetramer; dimer of dimers.</text>
</comment>
<comment type="subcellular location">
    <subcellularLocation>
        <location evidence="1">Cytoplasm</location>
    </subcellularLocation>
</comment>
<comment type="similarity">
    <text evidence="1">Belongs to the AdoMet synthase family.</text>
</comment>
<proteinExistence type="inferred from homology"/>
<accession>Q7V5A2</accession>
<organism>
    <name type="scientific">Prochlorococcus marinus (strain MIT 9313)</name>
    <dbReference type="NCBI Taxonomy" id="74547"/>
    <lineage>
        <taxon>Bacteria</taxon>
        <taxon>Bacillati</taxon>
        <taxon>Cyanobacteriota</taxon>
        <taxon>Cyanophyceae</taxon>
        <taxon>Synechococcales</taxon>
        <taxon>Prochlorococcaceae</taxon>
        <taxon>Prochlorococcus</taxon>
    </lineage>
</organism>